<sequence>MFSIINGLKNYNQQAIQAARYIGQGFLVTLDHMNRLPTTIQYPYEKLIPSERFRGRIHFEFDKCIACEVCVRVCPINLPVVDWELKKTIKKKQLKNYSIDFGVCIFCGNCVEYCPTNCLSMTEEYELSTYNRHELNYDQIALGRLPISIIEDSTIENIFNLTSLPKGKIEGHIYSRNITNIVN</sequence>
<protein>
    <recommendedName>
        <fullName evidence="1">NAD(P)H-quinone oxidoreductase subunit I, chloroplastic</fullName>
        <ecNumber evidence="1">7.1.1.-</ecNumber>
    </recommendedName>
    <alternativeName>
        <fullName evidence="1">NAD(P)H dehydrogenase subunit I</fullName>
        <shortName evidence="1">NDH subunit I</shortName>
    </alternativeName>
    <alternativeName>
        <fullName evidence="1">NADH-plastoquinone oxidoreductase subunit I</fullName>
    </alternativeName>
</protein>
<reference key="1">
    <citation type="journal article" date="1986" name="Nature">
        <title>Chloroplast gene organization deduced from complete sequence of liverwort Marchantia polymorpha chloroplast DNA.</title>
        <authorList>
            <person name="Ohyama K."/>
            <person name="Fukuzawa H."/>
            <person name="Kohchi T."/>
            <person name="Shirai H."/>
            <person name="Sano T."/>
            <person name="Sano S."/>
            <person name="Umesono K."/>
            <person name="Shiki Y."/>
            <person name="Takeuchi M."/>
            <person name="Chang Z."/>
            <person name="Aota S."/>
            <person name="Inokuchi H."/>
            <person name="Ozeki H."/>
        </authorList>
    </citation>
    <scope>NUCLEOTIDE SEQUENCE [LARGE SCALE GENOMIC DNA]</scope>
</reference>
<reference key="2">
    <citation type="journal article" date="1988" name="J. Mol. Biol.">
        <title>Structure and organization of Marchantia polymorpha chloroplast genome. IV. Inverted repeat and small single copy regions.</title>
        <authorList>
            <person name="Kohchi T."/>
            <person name="Shirai H."/>
            <person name="Fukuzawa H."/>
            <person name="Sano T."/>
            <person name="Komano T."/>
            <person name="Umesono K."/>
            <person name="Inokuchi H."/>
            <person name="Ozeki H."/>
            <person name="Ohyama K."/>
        </authorList>
    </citation>
    <scope>NUCLEOTIDE SEQUENCE [GENOMIC DNA]</scope>
</reference>
<geneLocation type="chloroplast"/>
<feature type="chain" id="PRO_0000118707" description="NAD(P)H-quinone oxidoreductase subunit I, chloroplastic">
    <location>
        <begin position="1"/>
        <end position="183"/>
    </location>
</feature>
<feature type="domain" description="4Fe-4S ferredoxin-type 1" evidence="1">
    <location>
        <begin position="55"/>
        <end position="84"/>
    </location>
</feature>
<feature type="domain" description="4Fe-4S ferredoxin-type 2" evidence="1">
    <location>
        <begin position="95"/>
        <end position="124"/>
    </location>
</feature>
<feature type="binding site" evidence="1">
    <location>
        <position position="64"/>
    </location>
    <ligand>
        <name>[4Fe-4S] cluster</name>
        <dbReference type="ChEBI" id="CHEBI:49883"/>
        <label>1</label>
    </ligand>
</feature>
<feature type="binding site" evidence="1">
    <location>
        <position position="67"/>
    </location>
    <ligand>
        <name>[4Fe-4S] cluster</name>
        <dbReference type="ChEBI" id="CHEBI:49883"/>
        <label>1</label>
    </ligand>
</feature>
<feature type="binding site" evidence="1">
    <location>
        <position position="70"/>
    </location>
    <ligand>
        <name>[4Fe-4S] cluster</name>
        <dbReference type="ChEBI" id="CHEBI:49883"/>
        <label>1</label>
    </ligand>
</feature>
<feature type="binding site" evidence="1">
    <location>
        <position position="74"/>
    </location>
    <ligand>
        <name>[4Fe-4S] cluster</name>
        <dbReference type="ChEBI" id="CHEBI:49883"/>
        <label>2</label>
    </ligand>
</feature>
<feature type="binding site" evidence="1">
    <location>
        <position position="104"/>
    </location>
    <ligand>
        <name>[4Fe-4S] cluster</name>
        <dbReference type="ChEBI" id="CHEBI:49883"/>
        <label>2</label>
    </ligand>
</feature>
<feature type="binding site" evidence="1">
    <location>
        <position position="107"/>
    </location>
    <ligand>
        <name>[4Fe-4S] cluster</name>
        <dbReference type="ChEBI" id="CHEBI:49883"/>
        <label>2</label>
    </ligand>
</feature>
<feature type="binding site" evidence="1">
    <location>
        <position position="110"/>
    </location>
    <ligand>
        <name>[4Fe-4S] cluster</name>
        <dbReference type="ChEBI" id="CHEBI:49883"/>
        <label>2</label>
    </ligand>
</feature>
<feature type="binding site" evidence="1">
    <location>
        <position position="114"/>
    </location>
    <ligand>
        <name>[4Fe-4S] cluster</name>
        <dbReference type="ChEBI" id="CHEBI:49883"/>
        <label>1</label>
    </ligand>
</feature>
<accession>P06253</accession>
<evidence type="ECO:0000255" key="1">
    <source>
        <dbReference type="HAMAP-Rule" id="MF_01351"/>
    </source>
</evidence>
<gene>
    <name evidence="1" type="primary">ndhI</name>
    <name type="synonym">frxB</name>
</gene>
<organism>
    <name type="scientific">Marchantia polymorpha</name>
    <name type="common">Common liverwort</name>
    <name type="synonym">Marchantia aquatica</name>
    <dbReference type="NCBI Taxonomy" id="3197"/>
    <lineage>
        <taxon>Eukaryota</taxon>
        <taxon>Viridiplantae</taxon>
        <taxon>Streptophyta</taxon>
        <taxon>Embryophyta</taxon>
        <taxon>Marchantiophyta</taxon>
        <taxon>Marchantiopsida</taxon>
        <taxon>Marchantiidae</taxon>
        <taxon>Marchantiales</taxon>
        <taxon>Marchantiaceae</taxon>
        <taxon>Marchantia</taxon>
    </lineage>
</organism>
<name>NDHI_MARPO</name>
<comment type="function">
    <text evidence="1">NDH shuttles electrons from NAD(P)H:plastoquinone, via FMN and iron-sulfur (Fe-S) centers, to quinones in the photosynthetic chain and possibly in a chloroplast respiratory chain. The immediate electron acceptor for the enzyme in this species is believed to be plastoquinone. Couples the redox reaction to proton translocation, and thus conserves the redox energy in a proton gradient.</text>
</comment>
<comment type="catalytic activity">
    <reaction evidence="1">
        <text>a plastoquinone + NADH + (n+1) H(+)(in) = a plastoquinol + NAD(+) + n H(+)(out)</text>
        <dbReference type="Rhea" id="RHEA:42608"/>
        <dbReference type="Rhea" id="RHEA-COMP:9561"/>
        <dbReference type="Rhea" id="RHEA-COMP:9562"/>
        <dbReference type="ChEBI" id="CHEBI:15378"/>
        <dbReference type="ChEBI" id="CHEBI:17757"/>
        <dbReference type="ChEBI" id="CHEBI:57540"/>
        <dbReference type="ChEBI" id="CHEBI:57945"/>
        <dbReference type="ChEBI" id="CHEBI:62192"/>
    </reaction>
</comment>
<comment type="catalytic activity">
    <reaction evidence="1">
        <text>a plastoquinone + NADPH + (n+1) H(+)(in) = a plastoquinol + NADP(+) + n H(+)(out)</text>
        <dbReference type="Rhea" id="RHEA:42612"/>
        <dbReference type="Rhea" id="RHEA-COMP:9561"/>
        <dbReference type="Rhea" id="RHEA-COMP:9562"/>
        <dbReference type="ChEBI" id="CHEBI:15378"/>
        <dbReference type="ChEBI" id="CHEBI:17757"/>
        <dbReference type="ChEBI" id="CHEBI:57783"/>
        <dbReference type="ChEBI" id="CHEBI:58349"/>
        <dbReference type="ChEBI" id="CHEBI:62192"/>
    </reaction>
</comment>
<comment type="cofactor">
    <cofactor evidence="1">
        <name>[4Fe-4S] cluster</name>
        <dbReference type="ChEBI" id="CHEBI:49883"/>
    </cofactor>
    <text evidence="1">Binds 2 [4Fe-4S] clusters per subunit.</text>
</comment>
<comment type="subunit">
    <text evidence="1">NDH is composed of at least 16 different subunits, 5 of which are encoded in the nucleus.</text>
</comment>
<comment type="subcellular location">
    <subcellularLocation>
        <location evidence="1">Plastid</location>
        <location evidence="1">Chloroplast thylakoid membrane</location>
        <topology evidence="1">Peripheral membrane protein</topology>
    </subcellularLocation>
</comment>
<comment type="similarity">
    <text evidence="1">Belongs to the complex I 23 kDa subunit family.</text>
</comment>
<proteinExistence type="inferred from homology"/>
<keyword id="KW-0004">4Fe-4S</keyword>
<keyword id="KW-0150">Chloroplast</keyword>
<keyword id="KW-0408">Iron</keyword>
<keyword id="KW-0411">Iron-sulfur</keyword>
<keyword id="KW-0472">Membrane</keyword>
<keyword id="KW-0479">Metal-binding</keyword>
<keyword id="KW-0520">NAD</keyword>
<keyword id="KW-0521">NADP</keyword>
<keyword id="KW-0934">Plastid</keyword>
<keyword id="KW-0618">Plastoquinone</keyword>
<keyword id="KW-0874">Quinone</keyword>
<keyword id="KW-0677">Repeat</keyword>
<keyword id="KW-0793">Thylakoid</keyword>
<keyword id="KW-1278">Translocase</keyword>
<dbReference type="EC" id="7.1.1.-" evidence="1"/>
<dbReference type="EMBL" id="X04465">
    <property type="protein sequence ID" value="CAA28138.1"/>
    <property type="molecule type" value="Genomic_DNA"/>
</dbReference>
<dbReference type="PIR" id="S01524">
    <property type="entry name" value="FELVB"/>
</dbReference>
<dbReference type="RefSeq" id="NP_039352.1">
    <property type="nucleotide sequence ID" value="NC_001319.1"/>
</dbReference>
<dbReference type="SMR" id="P06253"/>
<dbReference type="GeneID" id="2702579"/>
<dbReference type="GO" id="GO:0009535">
    <property type="term" value="C:chloroplast thylakoid membrane"/>
    <property type="evidence" value="ECO:0007669"/>
    <property type="project" value="UniProtKB-SubCell"/>
</dbReference>
<dbReference type="GO" id="GO:0051539">
    <property type="term" value="F:4 iron, 4 sulfur cluster binding"/>
    <property type="evidence" value="ECO:0007669"/>
    <property type="project" value="UniProtKB-KW"/>
</dbReference>
<dbReference type="GO" id="GO:0005506">
    <property type="term" value="F:iron ion binding"/>
    <property type="evidence" value="ECO:0007669"/>
    <property type="project" value="UniProtKB-UniRule"/>
</dbReference>
<dbReference type="GO" id="GO:0008137">
    <property type="term" value="F:NADH dehydrogenase (ubiquinone) activity"/>
    <property type="evidence" value="ECO:0007669"/>
    <property type="project" value="InterPro"/>
</dbReference>
<dbReference type="GO" id="GO:0048038">
    <property type="term" value="F:quinone binding"/>
    <property type="evidence" value="ECO:0007669"/>
    <property type="project" value="UniProtKB-KW"/>
</dbReference>
<dbReference type="GO" id="GO:0019684">
    <property type="term" value="P:photosynthesis, light reaction"/>
    <property type="evidence" value="ECO:0007669"/>
    <property type="project" value="UniProtKB-UniRule"/>
</dbReference>
<dbReference type="Gene3D" id="3.30.70.3270">
    <property type="match status" value="1"/>
</dbReference>
<dbReference type="HAMAP" id="MF_01351">
    <property type="entry name" value="NDH1_NuoI"/>
    <property type="match status" value="1"/>
</dbReference>
<dbReference type="InterPro" id="IPR017896">
    <property type="entry name" value="4Fe4S_Fe-S-bd"/>
</dbReference>
<dbReference type="InterPro" id="IPR017900">
    <property type="entry name" value="4Fe4S_Fe_S_CS"/>
</dbReference>
<dbReference type="InterPro" id="IPR010226">
    <property type="entry name" value="NADH_quinone_OxRdtase_chainI"/>
</dbReference>
<dbReference type="InterPro" id="IPR004497">
    <property type="entry name" value="NDHI"/>
</dbReference>
<dbReference type="NCBIfam" id="TIGR00403">
    <property type="entry name" value="ndhI"/>
    <property type="match status" value="1"/>
</dbReference>
<dbReference type="NCBIfam" id="TIGR01971">
    <property type="entry name" value="NuoI"/>
    <property type="match status" value="1"/>
</dbReference>
<dbReference type="NCBIfam" id="NF004537">
    <property type="entry name" value="PRK05888.1-3"/>
    <property type="match status" value="1"/>
</dbReference>
<dbReference type="PANTHER" id="PTHR47275">
    <property type="entry name" value="NAD(P)H-QUINONE OXIDOREDUCTASE SUBUNIT I, CHLOROPLASTIC"/>
    <property type="match status" value="1"/>
</dbReference>
<dbReference type="PANTHER" id="PTHR47275:SF1">
    <property type="entry name" value="NAD(P)H-QUINONE OXIDOREDUCTASE SUBUNIT I, CHLOROPLASTIC"/>
    <property type="match status" value="1"/>
</dbReference>
<dbReference type="Pfam" id="PF12838">
    <property type="entry name" value="Fer4_7"/>
    <property type="match status" value="1"/>
</dbReference>
<dbReference type="SUPFAM" id="SSF54862">
    <property type="entry name" value="4Fe-4S ferredoxins"/>
    <property type="match status" value="1"/>
</dbReference>
<dbReference type="PROSITE" id="PS00198">
    <property type="entry name" value="4FE4S_FER_1"/>
    <property type="match status" value="2"/>
</dbReference>
<dbReference type="PROSITE" id="PS51379">
    <property type="entry name" value="4FE4S_FER_2"/>
    <property type="match status" value="2"/>
</dbReference>